<organism>
    <name type="scientific">Caenorhabditis elegans</name>
    <dbReference type="NCBI Taxonomy" id="6239"/>
    <lineage>
        <taxon>Eukaryota</taxon>
        <taxon>Metazoa</taxon>
        <taxon>Ecdysozoa</taxon>
        <taxon>Nematoda</taxon>
        <taxon>Chromadorea</taxon>
        <taxon>Rhabditida</taxon>
        <taxon>Rhabditina</taxon>
        <taxon>Rhabditomorpha</taxon>
        <taxon>Rhabditoidea</taxon>
        <taxon>Rhabditidae</taxon>
        <taxon>Peloderinae</taxon>
        <taxon>Caenorhabditis</taxon>
    </lineage>
</organism>
<feature type="chain" id="PRO_0000204237" description="Regulator of G-protein signaling rgs-1">
    <location>
        <begin position="1"/>
        <end position="201"/>
    </location>
</feature>
<feature type="domain" description="RGS" evidence="1">
    <location>
        <begin position="37"/>
        <end position="156"/>
    </location>
</feature>
<feature type="region of interest" description="Disordered" evidence="2">
    <location>
        <begin position="168"/>
        <end position="201"/>
    </location>
</feature>
<feature type="compositionally biased region" description="Basic and acidic residues" evidence="2">
    <location>
        <begin position="170"/>
        <end position="183"/>
    </location>
</feature>
<keyword id="KW-1185">Reference proteome</keyword>
<keyword id="KW-0734">Signal transduction inhibitor</keyword>
<comment type="function">
    <text evidence="3">Inhibits G protein signaling in nervous system, interacting preferentially with the G(O) subfamily member goa-1. In vitro, protein acts as a GTPase activator of goa-1. Rgs-1 and rgs-2 redundantly adjust signaling when worms are fed to allow rapid induction of egg-laying behavior.</text>
</comment>
<comment type="tissue specificity">
    <text evidence="3">Expressed in most or all neurons.</text>
</comment>
<protein>
    <recommendedName>
        <fullName>Regulator of G-protein signaling rgs-1</fullName>
    </recommendedName>
</protein>
<accession>P34295</accession>
<accession>Q9NHP9</accession>
<proteinExistence type="evidence at transcript level"/>
<sequence>MGYMGCWCSNLGRKYSGTVSPQRSVQPEALSYEMVYSWQQSFDTLMSFKSGQKCFAEFLKSEYSDENILFWQACEELKREKNSEKMEEKARIIYEDFISILSPKEVSLDSKVREIVNTNMSRPTQNTFEDAQHQIYQLMARDSYPRFLTSIFYRETLASFGITEMDIGGDEEKEREQRAERARLNVPATAAEGSSKDISMV</sequence>
<name>RGS1_CAEEL</name>
<evidence type="ECO:0000255" key="1">
    <source>
        <dbReference type="PROSITE-ProRule" id="PRU00171"/>
    </source>
</evidence>
<evidence type="ECO:0000256" key="2">
    <source>
        <dbReference type="SAM" id="MobiDB-lite"/>
    </source>
</evidence>
<evidence type="ECO:0000269" key="3">
    <source>
    </source>
</evidence>
<gene>
    <name type="primary">rgs-1</name>
    <name type="ORF">C05B5.7</name>
</gene>
<dbReference type="EMBL" id="AF220159">
    <property type="protein sequence ID" value="AAF33236.1"/>
    <property type="molecule type" value="mRNA"/>
</dbReference>
<dbReference type="EMBL" id="Z32679">
    <property type="protein sequence ID" value="CAA83595.2"/>
    <property type="molecule type" value="Genomic_DNA"/>
</dbReference>
<dbReference type="PIR" id="G88571">
    <property type="entry name" value="G88571"/>
</dbReference>
<dbReference type="RefSeq" id="NP_001255057.1">
    <property type="nucleotide sequence ID" value="NM_001268128.1"/>
</dbReference>
<dbReference type="RefSeq" id="NP_001369842.1">
    <property type="nucleotide sequence ID" value="NM_001382973.1"/>
</dbReference>
<dbReference type="SMR" id="P34295"/>
<dbReference type="BioGRID" id="41609">
    <property type="interactions" value="1"/>
</dbReference>
<dbReference type="FunCoup" id="P34295">
    <property type="interactions" value="648"/>
</dbReference>
<dbReference type="STRING" id="6239.C05B5.7b.1"/>
<dbReference type="PaxDb" id="6239-C05B5.7b"/>
<dbReference type="EnsemblMetazoa" id="C05B5.7a.1">
    <property type="protein sequence ID" value="C05B5.7a.1"/>
    <property type="gene ID" value="WBGene00004344"/>
</dbReference>
<dbReference type="EnsemblMetazoa" id="C05B5.7a.2">
    <property type="protein sequence ID" value="C05B5.7a.2"/>
    <property type="gene ID" value="WBGene00004344"/>
</dbReference>
<dbReference type="GeneID" id="176415"/>
<dbReference type="UCSC" id="C05B5.7">
    <property type="organism name" value="c. elegans"/>
</dbReference>
<dbReference type="AGR" id="WB:WBGene00004344"/>
<dbReference type="WormBase" id="C05B5.7a">
    <property type="protein sequence ID" value="CE27794"/>
    <property type="gene ID" value="WBGene00004344"/>
    <property type="gene designation" value="rgs-1"/>
</dbReference>
<dbReference type="eggNOG" id="KOG3589">
    <property type="taxonomic scope" value="Eukaryota"/>
</dbReference>
<dbReference type="GeneTree" id="ENSGT00970000196738"/>
<dbReference type="HOGENOM" id="CLU_059863_1_2_1"/>
<dbReference type="InParanoid" id="P34295"/>
<dbReference type="PhylomeDB" id="P34295"/>
<dbReference type="Reactome" id="R-CEL-416476">
    <property type="pathway name" value="G alpha (q) signalling events"/>
</dbReference>
<dbReference type="Reactome" id="R-CEL-418594">
    <property type="pathway name" value="G alpha (i) signalling events"/>
</dbReference>
<dbReference type="Reactome" id="R-CEL-418597">
    <property type="pathway name" value="G alpha (z) signalling events"/>
</dbReference>
<dbReference type="PRO" id="PR:P34295"/>
<dbReference type="Proteomes" id="UP000001940">
    <property type="component" value="Chromosome III"/>
</dbReference>
<dbReference type="Bgee" id="WBGene00004344">
    <property type="expression patterns" value="Expressed in pharyngeal muscle cell (C elegans) and 3 other cell types or tissues"/>
</dbReference>
<dbReference type="ExpressionAtlas" id="P34295">
    <property type="expression patterns" value="baseline and differential"/>
</dbReference>
<dbReference type="GO" id="GO:0005096">
    <property type="term" value="F:GTPase activator activity"/>
    <property type="evidence" value="ECO:0000314"/>
    <property type="project" value="WormBase"/>
</dbReference>
<dbReference type="GO" id="GO:0007635">
    <property type="term" value="P:chemosensory behavior"/>
    <property type="evidence" value="ECO:0000315"/>
    <property type="project" value="UniProtKB"/>
</dbReference>
<dbReference type="GO" id="GO:0009968">
    <property type="term" value="P:negative regulation of signal transduction"/>
    <property type="evidence" value="ECO:0007669"/>
    <property type="project" value="UniProtKB-KW"/>
</dbReference>
<dbReference type="GO" id="GO:0050913">
    <property type="term" value="P:sensory perception of bitter taste"/>
    <property type="evidence" value="ECO:0000315"/>
    <property type="project" value="UniProtKB"/>
</dbReference>
<dbReference type="FunFam" id="1.10.167.10:FF:000001">
    <property type="entry name" value="Putative regulator of g-protein signaling 12"/>
    <property type="match status" value="1"/>
</dbReference>
<dbReference type="Gene3D" id="1.10.196.10">
    <property type="match status" value="1"/>
</dbReference>
<dbReference type="Gene3D" id="1.10.167.10">
    <property type="entry name" value="Regulator of G-protein Signalling 4, domain 2"/>
    <property type="match status" value="1"/>
</dbReference>
<dbReference type="InterPro" id="IPR016137">
    <property type="entry name" value="RGS"/>
</dbReference>
<dbReference type="InterPro" id="IPR036305">
    <property type="entry name" value="RGS_sf"/>
</dbReference>
<dbReference type="InterPro" id="IPR024066">
    <property type="entry name" value="RGS_subdom1/3"/>
</dbReference>
<dbReference type="InterPro" id="IPR044926">
    <property type="entry name" value="RGS_subdomain_2"/>
</dbReference>
<dbReference type="PANTHER" id="PTHR10845">
    <property type="entry name" value="REGULATOR OF G PROTEIN SIGNALING"/>
    <property type="match status" value="1"/>
</dbReference>
<dbReference type="PANTHER" id="PTHR10845:SF264">
    <property type="entry name" value="REGULATOR OF G-PROTEIN SIGNALING RGS-1"/>
    <property type="match status" value="1"/>
</dbReference>
<dbReference type="Pfam" id="PF00615">
    <property type="entry name" value="RGS"/>
    <property type="match status" value="1"/>
</dbReference>
<dbReference type="PRINTS" id="PR01301">
    <property type="entry name" value="RGSPROTEIN"/>
</dbReference>
<dbReference type="SMART" id="SM00315">
    <property type="entry name" value="RGS"/>
    <property type="match status" value="1"/>
</dbReference>
<dbReference type="SUPFAM" id="SSF48097">
    <property type="entry name" value="Regulator of G-protein signaling, RGS"/>
    <property type="match status" value="1"/>
</dbReference>
<dbReference type="PROSITE" id="PS50132">
    <property type="entry name" value="RGS"/>
    <property type="match status" value="1"/>
</dbReference>
<reference key="1">
    <citation type="journal article" date="2000" name="Genes Dev.">
        <title>Multiple RGS proteins alter neural G protein signaling to allow C. elegans to rapidly change behavior when fed.</title>
        <authorList>
            <person name="Dong M.-Q."/>
            <person name="Chase D."/>
            <person name="Patikoglou G.A."/>
            <person name="Koelle M.R."/>
        </authorList>
    </citation>
    <scope>NUCLEOTIDE SEQUENCE [MRNA]</scope>
    <scope>FUNCTION</scope>
    <scope>TISSUE SPECIFICITY</scope>
</reference>
<reference key="2">
    <citation type="journal article" date="1998" name="Science">
        <title>Genome sequence of the nematode C. elegans: a platform for investigating biology.</title>
        <authorList>
            <consortium name="The C. elegans sequencing consortium"/>
        </authorList>
    </citation>
    <scope>NUCLEOTIDE SEQUENCE [LARGE SCALE GENOMIC DNA]</scope>
    <source>
        <strain>Bristol N2</strain>
    </source>
</reference>